<evidence type="ECO:0000255" key="1">
    <source>
        <dbReference type="HAMAP-Rule" id="MF_00121"/>
    </source>
</evidence>
<feature type="chain" id="PRO_0000241231" description="Aspartyl/glutamyl-tRNA(Asn/Gln) amidotransferase subunit B">
    <location>
        <begin position="1"/>
        <end position="476"/>
    </location>
</feature>
<dbReference type="EC" id="6.3.5.-" evidence="1"/>
<dbReference type="EMBL" id="CP000033">
    <property type="protein sequence ID" value="AAV42414.1"/>
    <property type="molecule type" value="Genomic_DNA"/>
</dbReference>
<dbReference type="RefSeq" id="WP_011254176.1">
    <property type="nucleotide sequence ID" value="NC_006814.3"/>
</dbReference>
<dbReference type="RefSeq" id="YP_193445.1">
    <property type="nucleotide sequence ID" value="NC_006814.3"/>
</dbReference>
<dbReference type="SMR" id="Q5FLL0"/>
<dbReference type="STRING" id="272621.LBA0533"/>
<dbReference type="GeneID" id="93290339"/>
<dbReference type="KEGG" id="lac:LBA0533"/>
<dbReference type="PATRIC" id="fig|272621.13.peg.508"/>
<dbReference type="eggNOG" id="COG0064">
    <property type="taxonomic scope" value="Bacteria"/>
</dbReference>
<dbReference type="HOGENOM" id="CLU_019240_0_0_9"/>
<dbReference type="OrthoDB" id="9804078at2"/>
<dbReference type="BioCyc" id="LACI272621:G1G49-556-MONOMER"/>
<dbReference type="Proteomes" id="UP000006381">
    <property type="component" value="Chromosome"/>
</dbReference>
<dbReference type="GO" id="GO:0050566">
    <property type="term" value="F:asparaginyl-tRNA synthase (glutamine-hydrolyzing) activity"/>
    <property type="evidence" value="ECO:0007669"/>
    <property type="project" value="RHEA"/>
</dbReference>
<dbReference type="GO" id="GO:0005524">
    <property type="term" value="F:ATP binding"/>
    <property type="evidence" value="ECO:0007669"/>
    <property type="project" value="UniProtKB-KW"/>
</dbReference>
<dbReference type="GO" id="GO:0050567">
    <property type="term" value="F:glutaminyl-tRNA synthase (glutamine-hydrolyzing) activity"/>
    <property type="evidence" value="ECO:0007669"/>
    <property type="project" value="UniProtKB-UniRule"/>
</dbReference>
<dbReference type="GO" id="GO:0070681">
    <property type="term" value="P:glutaminyl-tRNAGln biosynthesis via transamidation"/>
    <property type="evidence" value="ECO:0007669"/>
    <property type="project" value="TreeGrafter"/>
</dbReference>
<dbReference type="GO" id="GO:0006412">
    <property type="term" value="P:translation"/>
    <property type="evidence" value="ECO:0007669"/>
    <property type="project" value="UniProtKB-UniRule"/>
</dbReference>
<dbReference type="FunFam" id="1.10.10.410:FF:000001">
    <property type="entry name" value="Aspartyl/glutamyl-tRNA(Asn/Gln) amidotransferase subunit B"/>
    <property type="match status" value="1"/>
</dbReference>
<dbReference type="Gene3D" id="1.10.10.410">
    <property type="match status" value="1"/>
</dbReference>
<dbReference type="Gene3D" id="1.10.150.380">
    <property type="entry name" value="GatB domain, N-terminal subdomain"/>
    <property type="match status" value="1"/>
</dbReference>
<dbReference type="HAMAP" id="MF_00121">
    <property type="entry name" value="GatB"/>
    <property type="match status" value="1"/>
</dbReference>
<dbReference type="InterPro" id="IPR017959">
    <property type="entry name" value="Asn/Gln-tRNA_amidoTrfase_suB/E"/>
</dbReference>
<dbReference type="InterPro" id="IPR006075">
    <property type="entry name" value="Asn/Gln-tRNA_Trfase_suB/E_cat"/>
</dbReference>
<dbReference type="InterPro" id="IPR018027">
    <property type="entry name" value="Asn/Gln_amidotransferase"/>
</dbReference>
<dbReference type="InterPro" id="IPR003789">
    <property type="entry name" value="Asn/Gln_tRNA_amidoTrase-B-like"/>
</dbReference>
<dbReference type="InterPro" id="IPR004413">
    <property type="entry name" value="GatB"/>
</dbReference>
<dbReference type="InterPro" id="IPR042114">
    <property type="entry name" value="GatB_C_1"/>
</dbReference>
<dbReference type="InterPro" id="IPR023168">
    <property type="entry name" value="GatB_Yqey_C_2"/>
</dbReference>
<dbReference type="InterPro" id="IPR017958">
    <property type="entry name" value="Gln-tRNA_amidoTrfase_suB_CS"/>
</dbReference>
<dbReference type="InterPro" id="IPR014746">
    <property type="entry name" value="Gln_synth/guanido_kin_cat_dom"/>
</dbReference>
<dbReference type="NCBIfam" id="TIGR00133">
    <property type="entry name" value="gatB"/>
    <property type="match status" value="1"/>
</dbReference>
<dbReference type="NCBIfam" id="NF004011">
    <property type="entry name" value="PRK05477.1-1"/>
    <property type="match status" value="1"/>
</dbReference>
<dbReference type="NCBIfam" id="NF004012">
    <property type="entry name" value="PRK05477.1-2"/>
    <property type="match status" value="1"/>
</dbReference>
<dbReference type="NCBIfam" id="NF004014">
    <property type="entry name" value="PRK05477.1-4"/>
    <property type="match status" value="1"/>
</dbReference>
<dbReference type="PANTHER" id="PTHR11659">
    <property type="entry name" value="GLUTAMYL-TRNA GLN AMIDOTRANSFERASE SUBUNIT B MITOCHONDRIAL AND PROKARYOTIC PET112-RELATED"/>
    <property type="match status" value="1"/>
</dbReference>
<dbReference type="PANTHER" id="PTHR11659:SF0">
    <property type="entry name" value="GLUTAMYL-TRNA(GLN) AMIDOTRANSFERASE SUBUNIT B, MITOCHONDRIAL"/>
    <property type="match status" value="1"/>
</dbReference>
<dbReference type="Pfam" id="PF02934">
    <property type="entry name" value="GatB_N"/>
    <property type="match status" value="1"/>
</dbReference>
<dbReference type="Pfam" id="PF02637">
    <property type="entry name" value="GatB_Yqey"/>
    <property type="match status" value="1"/>
</dbReference>
<dbReference type="SMART" id="SM00845">
    <property type="entry name" value="GatB_Yqey"/>
    <property type="match status" value="1"/>
</dbReference>
<dbReference type="SUPFAM" id="SSF89095">
    <property type="entry name" value="GatB/YqeY motif"/>
    <property type="match status" value="1"/>
</dbReference>
<dbReference type="SUPFAM" id="SSF55931">
    <property type="entry name" value="Glutamine synthetase/guanido kinase"/>
    <property type="match status" value="1"/>
</dbReference>
<dbReference type="PROSITE" id="PS01234">
    <property type="entry name" value="GATB"/>
    <property type="match status" value="1"/>
</dbReference>
<reference key="1">
    <citation type="journal article" date="2005" name="Proc. Natl. Acad. Sci. U.S.A.">
        <title>Complete genome sequence of the probiotic lactic acid bacterium Lactobacillus acidophilus NCFM.</title>
        <authorList>
            <person name="Altermann E."/>
            <person name="Russell W.M."/>
            <person name="Azcarate-Peril M.A."/>
            <person name="Barrangou R."/>
            <person name="Buck B.L."/>
            <person name="McAuliffe O."/>
            <person name="Souther N."/>
            <person name="Dobson A."/>
            <person name="Duong T."/>
            <person name="Callanan M."/>
            <person name="Lick S."/>
            <person name="Hamrick A."/>
            <person name="Cano R."/>
            <person name="Klaenhammer T.R."/>
        </authorList>
    </citation>
    <scope>NUCLEOTIDE SEQUENCE [LARGE SCALE GENOMIC DNA]</scope>
    <source>
        <strain>ATCC 700396 / NCK56 / N2 / NCFM</strain>
    </source>
</reference>
<sequence length="476" mass="53823">MNFKSTIGLEVHFELKTKSKIFSPSPVTYGAEQNTETNVIDWAMPGTLPMVNKNVYRLGIMVALATHSHILPTTHFDRKNYFYPDNPKAYQITQFFQPLARDGYIEVEVRGKKKRIGIHEMHIEEDAGKNTHGTNGYSYVDLNRQGVPLLEVVSEPDMEDPEEAYAYLEKLRKIVQFTGASDVKMEEGSMRVDTNISIRPAGQKELGTKVEMKNLNSFDHVRRSLAYEEKRQEQVLLAGGHIQLSTRRFDEATGKTVLERVKEGASDYRYFPEPDIAPDHISQEWIDQIAKELPKSPFDRYDDYVNKFGLKPYDANVLLQTKESSDFFDAAVAAGADPTLAANWMNTQVNGYLNDNRVSLEDIKLTPENLAKMIKLIQDGTISSKIAKKVFAETVANGTDPKKYVEDNGMVQLSDTSVLEPMVKKVVDDNPQSVEDFKNGKDRAIGFLVGQIMKQTRGKANPKMVNKLLNQELQSR</sequence>
<proteinExistence type="inferred from homology"/>
<organism>
    <name type="scientific">Lactobacillus acidophilus (strain ATCC 700396 / NCK56 / N2 / NCFM)</name>
    <dbReference type="NCBI Taxonomy" id="272621"/>
    <lineage>
        <taxon>Bacteria</taxon>
        <taxon>Bacillati</taxon>
        <taxon>Bacillota</taxon>
        <taxon>Bacilli</taxon>
        <taxon>Lactobacillales</taxon>
        <taxon>Lactobacillaceae</taxon>
        <taxon>Lactobacillus</taxon>
    </lineage>
</organism>
<gene>
    <name evidence="1" type="primary">gatB</name>
    <name type="ordered locus">LBA0533</name>
</gene>
<protein>
    <recommendedName>
        <fullName evidence="1">Aspartyl/glutamyl-tRNA(Asn/Gln) amidotransferase subunit B</fullName>
        <shortName evidence="1">Asp/Glu-ADT subunit B</shortName>
        <ecNumber evidence="1">6.3.5.-</ecNumber>
    </recommendedName>
</protein>
<keyword id="KW-0067">ATP-binding</keyword>
<keyword id="KW-0436">Ligase</keyword>
<keyword id="KW-0547">Nucleotide-binding</keyword>
<keyword id="KW-0648">Protein biosynthesis</keyword>
<keyword id="KW-1185">Reference proteome</keyword>
<name>GATB_LACAC</name>
<accession>Q5FLL0</accession>
<comment type="function">
    <text evidence="1">Allows the formation of correctly charged Asn-tRNA(Asn) or Gln-tRNA(Gln) through the transamidation of misacylated Asp-tRNA(Asn) or Glu-tRNA(Gln) in organisms which lack either or both of asparaginyl-tRNA or glutaminyl-tRNA synthetases. The reaction takes place in the presence of glutamine and ATP through an activated phospho-Asp-tRNA(Asn) or phospho-Glu-tRNA(Gln).</text>
</comment>
<comment type="catalytic activity">
    <reaction evidence="1">
        <text>L-glutamyl-tRNA(Gln) + L-glutamine + ATP + H2O = L-glutaminyl-tRNA(Gln) + L-glutamate + ADP + phosphate + H(+)</text>
        <dbReference type="Rhea" id="RHEA:17521"/>
        <dbReference type="Rhea" id="RHEA-COMP:9681"/>
        <dbReference type="Rhea" id="RHEA-COMP:9684"/>
        <dbReference type="ChEBI" id="CHEBI:15377"/>
        <dbReference type="ChEBI" id="CHEBI:15378"/>
        <dbReference type="ChEBI" id="CHEBI:29985"/>
        <dbReference type="ChEBI" id="CHEBI:30616"/>
        <dbReference type="ChEBI" id="CHEBI:43474"/>
        <dbReference type="ChEBI" id="CHEBI:58359"/>
        <dbReference type="ChEBI" id="CHEBI:78520"/>
        <dbReference type="ChEBI" id="CHEBI:78521"/>
        <dbReference type="ChEBI" id="CHEBI:456216"/>
    </reaction>
</comment>
<comment type="catalytic activity">
    <reaction evidence="1">
        <text>L-aspartyl-tRNA(Asn) + L-glutamine + ATP + H2O = L-asparaginyl-tRNA(Asn) + L-glutamate + ADP + phosphate + 2 H(+)</text>
        <dbReference type="Rhea" id="RHEA:14513"/>
        <dbReference type="Rhea" id="RHEA-COMP:9674"/>
        <dbReference type="Rhea" id="RHEA-COMP:9677"/>
        <dbReference type="ChEBI" id="CHEBI:15377"/>
        <dbReference type="ChEBI" id="CHEBI:15378"/>
        <dbReference type="ChEBI" id="CHEBI:29985"/>
        <dbReference type="ChEBI" id="CHEBI:30616"/>
        <dbReference type="ChEBI" id="CHEBI:43474"/>
        <dbReference type="ChEBI" id="CHEBI:58359"/>
        <dbReference type="ChEBI" id="CHEBI:78515"/>
        <dbReference type="ChEBI" id="CHEBI:78516"/>
        <dbReference type="ChEBI" id="CHEBI:456216"/>
    </reaction>
</comment>
<comment type="subunit">
    <text evidence="1">Heterotrimer of A, B and C subunits.</text>
</comment>
<comment type="similarity">
    <text evidence="1">Belongs to the GatB/GatE family. GatB subfamily.</text>
</comment>